<keyword id="KW-0963">Cytoplasm</keyword>
<keyword id="KW-0690">Ribosome biogenesis</keyword>
<comment type="function">
    <text evidence="1">One of several proteins that assist in the late maturation steps of the functional core of the 30S ribosomal subunit. Associates with free 30S ribosomal subunits (but not with 30S subunits that are part of 70S ribosomes or polysomes). Required for efficient processing of 16S rRNA. May interact with the 5'-terminal helix region of 16S rRNA.</text>
</comment>
<comment type="subunit">
    <text evidence="1">Monomer. Binds 30S ribosomal subunits, but not 50S ribosomal subunits or 70S ribosomes.</text>
</comment>
<comment type="subcellular location">
    <subcellularLocation>
        <location evidence="1">Cytoplasm</location>
    </subcellularLocation>
</comment>
<comment type="similarity">
    <text evidence="1">Belongs to the RbfA family.</text>
</comment>
<gene>
    <name evidence="1" type="primary">rbfA</name>
    <name type="ordered locus">ABBFA_003198</name>
</gene>
<organism>
    <name type="scientific">Acinetobacter baumannii (strain AB307-0294)</name>
    <dbReference type="NCBI Taxonomy" id="557600"/>
    <lineage>
        <taxon>Bacteria</taxon>
        <taxon>Pseudomonadati</taxon>
        <taxon>Pseudomonadota</taxon>
        <taxon>Gammaproteobacteria</taxon>
        <taxon>Moraxellales</taxon>
        <taxon>Moraxellaceae</taxon>
        <taxon>Acinetobacter</taxon>
        <taxon>Acinetobacter calcoaceticus/baumannii complex</taxon>
    </lineage>
</organism>
<evidence type="ECO:0000255" key="1">
    <source>
        <dbReference type="HAMAP-Rule" id="MF_00003"/>
    </source>
</evidence>
<feature type="chain" id="PRO_1000193219" description="Ribosome-binding factor A">
    <location>
        <begin position="1"/>
        <end position="133"/>
    </location>
</feature>
<proteinExistence type="inferred from homology"/>
<accession>B7H114</accession>
<dbReference type="EMBL" id="CP001172">
    <property type="protein sequence ID" value="ACJ59267.1"/>
    <property type="molecule type" value="Genomic_DNA"/>
</dbReference>
<dbReference type="RefSeq" id="WP_000897046.1">
    <property type="nucleotide sequence ID" value="NZ_CP001172.1"/>
</dbReference>
<dbReference type="SMR" id="B7H114"/>
<dbReference type="HOGENOM" id="CLU_089475_5_0_6"/>
<dbReference type="Proteomes" id="UP000006924">
    <property type="component" value="Chromosome"/>
</dbReference>
<dbReference type="GO" id="GO:0005829">
    <property type="term" value="C:cytosol"/>
    <property type="evidence" value="ECO:0007669"/>
    <property type="project" value="TreeGrafter"/>
</dbReference>
<dbReference type="GO" id="GO:0043024">
    <property type="term" value="F:ribosomal small subunit binding"/>
    <property type="evidence" value="ECO:0007669"/>
    <property type="project" value="TreeGrafter"/>
</dbReference>
<dbReference type="GO" id="GO:0030490">
    <property type="term" value="P:maturation of SSU-rRNA"/>
    <property type="evidence" value="ECO:0007669"/>
    <property type="project" value="UniProtKB-UniRule"/>
</dbReference>
<dbReference type="Gene3D" id="3.30.300.20">
    <property type="match status" value="1"/>
</dbReference>
<dbReference type="HAMAP" id="MF_00003">
    <property type="entry name" value="RbfA"/>
    <property type="match status" value="1"/>
</dbReference>
<dbReference type="InterPro" id="IPR015946">
    <property type="entry name" value="KH_dom-like_a/b"/>
</dbReference>
<dbReference type="InterPro" id="IPR000238">
    <property type="entry name" value="RbfA"/>
</dbReference>
<dbReference type="InterPro" id="IPR023799">
    <property type="entry name" value="RbfA_dom_sf"/>
</dbReference>
<dbReference type="NCBIfam" id="NF010389">
    <property type="entry name" value="PRK13816.1"/>
    <property type="match status" value="1"/>
</dbReference>
<dbReference type="NCBIfam" id="TIGR00082">
    <property type="entry name" value="rbfA"/>
    <property type="match status" value="1"/>
</dbReference>
<dbReference type="PANTHER" id="PTHR33515">
    <property type="entry name" value="RIBOSOME-BINDING FACTOR A, CHLOROPLASTIC-RELATED"/>
    <property type="match status" value="1"/>
</dbReference>
<dbReference type="PANTHER" id="PTHR33515:SF1">
    <property type="entry name" value="RIBOSOME-BINDING FACTOR A, CHLOROPLASTIC-RELATED"/>
    <property type="match status" value="1"/>
</dbReference>
<dbReference type="Pfam" id="PF02033">
    <property type="entry name" value="RBFA"/>
    <property type="match status" value="1"/>
</dbReference>
<dbReference type="SUPFAM" id="SSF89919">
    <property type="entry name" value="Ribosome-binding factor A, RbfA"/>
    <property type="match status" value="1"/>
</dbReference>
<protein>
    <recommendedName>
        <fullName evidence="1">Ribosome-binding factor A</fullName>
    </recommendedName>
</protein>
<sequence>MAGGQRLKRMADSVQRELSELIRQELKDPRLGGLVTISGVKVSPDLGYADVYVTVMGRELSDDQNEVAHRETLDILNKASGFLRQELSRRIKTRITPRLRFHYDKTNAYGNYMFGLIEKAVQDLPKRESDDEE</sequence>
<name>RBFA_ACIB3</name>
<reference key="1">
    <citation type="journal article" date="2008" name="J. Bacteriol.">
        <title>Comparative genome sequence analysis of multidrug-resistant Acinetobacter baumannii.</title>
        <authorList>
            <person name="Adams M.D."/>
            <person name="Goglin K."/>
            <person name="Molyneaux N."/>
            <person name="Hujer K.M."/>
            <person name="Lavender H."/>
            <person name="Jamison J.J."/>
            <person name="MacDonald I.J."/>
            <person name="Martin K.M."/>
            <person name="Russo T."/>
            <person name="Campagnari A.A."/>
            <person name="Hujer A.M."/>
            <person name="Bonomo R.A."/>
            <person name="Gill S.R."/>
        </authorList>
    </citation>
    <scope>NUCLEOTIDE SEQUENCE [LARGE SCALE GENOMIC DNA]</scope>
    <source>
        <strain>AB307-0294</strain>
    </source>
</reference>